<feature type="chain" id="PRO_0000321736" description="Ribosome maturation factor RimM">
    <location>
        <begin position="1"/>
        <end position="173"/>
    </location>
</feature>
<feature type="domain" description="PRC barrel" evidence="1">
    <location>
        <begin position="98"/>
        <end position="171"/>
    </location>
</feature>
<evidence type="ECO:0000255" key="1">
    <source>
        <dbReference type="HAMAP-Rule" id="MF_00014"/>
    </source>
</evidence>
<sequence length="173" mass="19472">MTNTENYFKVGTIVNTHGIRGEVKIMAITDFAQDRFKKGADLFIDTKQGRIPVKVQSSRLHKNMWLVLFVGVTNINEIEKYKGDDVYIEGTARPELEDDQYYYDEIIDSTVVDLDGNKIGVVKEIMETGANDVWIVQRDGQSDALIPMIDDVVKSVDVDAKLITIDALEGLLD</sequence>
<gene>
    <name evidence="1" type="primary">rimM</name>
    <name type="ordered locus">LEUM_1479</name>
</gene>
<reference key="1">
    <citation type="journal article" date="2006" name="Proc. Natl. Acad. Sci. U.S.A.">
        <title>Comparative genomics of the lactic acid bacteria.</title>
        <authorList>
            <person name="Makarova K.S."/>
            <person name="Slesarev A."/>
            <person name="Wolf Y.I."/>
            <person name="Sorokin A."/>
            <person name="Mirkin B."/>
            <person name="Koonin E.V."/>
            <person name="Pavlov A."/>
            <person name="Pavlova N."/>
            <person name="Karamychev V."/>
            <person name="Polouchine N."/>
            <person name="Shakhova V."/>
            <person name="Grigoriev I."/>
            <person name="Lou Y."/>
            <person name="Rohksar D."/>
            <person name="Lucas S."/>
            <person name="Huang K."/>
            <person name="Goodstein D.M."/>
            <person name="Hawkins T."/>
            <person name="Plengvidhya V."/>
            <person name="Welker D."/>
            <person name="Hughes J."/>
            <person name="Goh Y."/>
            <person name="Benson A."/>
            <person name="Baldwin K."/>
            <person name="Lee J.-H."/>
            <person name="Diaz-Muniz I."/>
            <person name="Dosti B."/>
            <person name="Smeianov V."/>
            <person name="Wechter W."/>
            <person name="Barabote R."/>
            <person name="Lorca G."/>
            <person name="Altermann E."/>
            <person name="Barrangou R."/>
            <person name="Ganesan B."/>
            <person name="Xie Y."/>
            <person name="Rawsthorne H."/>
            <person name="Tamir D."/>
            <person name="Parker C."/>
            <person name="Breidt F."/>
            <person name="Broadbent J.R."/>
            <person name="Hutkins R."/>
            <person name="O'Sullivan D."/>
            <person name="Steele J."/>
            <person name="Unlu G."/>
            <person name="Saier M.H. Jr."/>
            <person name="Klaenhammer T."/>
            <person name="Richardson P."/>
            <person name="Kozyavkin S."/>
            <person name="Weimer B.C."/>
            <person name="Mills D.A."/>
        </authorList>
    </citation>
    <scope>NUCLEOTIDE SEQUENCE [LARGE SCALE GENOMIC DNA]</scope>
    <source>
        <strain>ATCC 8293 / DSM 20343 / BCRC 11652 / CCM 1803 / JCM 6124 / NCDO 523 / NBRC 100496 / NCIMB 8023 / NCTC 12954 / NRRL B-1118 / 37Y</strain>
    </source>
</reference>
<name>RIMM_LEUMM</name>
<accession>Q03W51</accession>
<keyword id="KW-0143">Chaperone</keyword>
<keyword id="KW-0963">Cytoplasm</keyword>
<keyword id="KW-1185">Reference proteome</keyword>
<keyword id="KW-0690">Ribosome biogenesis</keyword>
<keyword id="KW-0698">rRNA processing</keyword>
<dbReference type="EMBL" id="CP000414">
    <property type="protein sequence ID" value="ABJ62571.1"/>
    <property type="molecule type" value="Genomic_DNA"/>
</dbReference>
<dbReference type="RefSeq" id="WP_011680158.1">
    <property type="nucleotide sequence ID" value="NC_008531.1"/>
</dbReference>
<dbReference type="SMR" id="Q03W51"/>
<dbReference type="EnsemblBacteria" id="ABJ62571">
    <property type="protein sequence ID" value="ABJ62571"/>
    <property type="gene ID" value="LEUM_1479"/>
</dbReference>
<dbReference type="GeneID" id="29575911"/>
<dbReference type="KEGG" id="lme:LEUM_1479"/>
<dbReference type="eggNOG" id="COG0806">
    <property type="taxonomic scope" value="Bacteria"/>
</dbReference>
<dbReference type="HOGENOM" id="CLU_077636_3_1_9"/>
<dbReference type="Proteomes" id="UP000000362">
    <property type="component" value="Chromosome"/>
</dbReference>
<dbReference type="GO" id="GO:0005737">
    <property type="term" value="C:cytoplasm"/>
    <property type="evidence" value="ECO:0007669"/>
    <property type="project" value="UniProtKB-SubCell"/>
</dbReference>
<dbReference type="GO" id="GO:0005840">
    <property type="term" value="C:ribosome"/>
    <property type="evidence" value="ECO:0007669"/>
    <property type="project" value="InterPro"/>
</dbReference>
<dbReference type="GO" id="GO:0043022">
    <property type="term" value="F:ribosome binding"/>
    <property type="evidence" value="ECO:0007669"/>
    <property type="project" value="InterPro"/>
</dbReference>
<dbReference type="GO" id="GO:0042274">
    <property type="term" value="P:ribosomal small subunit biogenesis"/>
    <property type="evidence" value="ECO:0007669"/>
    <property type="project" value="UniProtKB-UniRule"/>
</dbReference>
<dbReference type="GO" id="GO:0006364">
    <property type="term" value="P:rRNA processing"/>
    <property type="evidence" value="ECO:0007669"/>
    <property type="project" value="UniProtKB-UniRule"/>
</dbReference>
<dbReference type="Gene3D" id="2.30.30.240">
    <property type="entry name" value="PRC-barrel domain"/>
    <property type="match status" value="1"/>
</dbReference>
<dbReference type="Gene3D" id="2.40.30.60">
    <property type="entry name" value="RimM"/>
    <property type="match status" value="1"/>
</dbReference>
<dbReference type="HAMAP" id="MF_00014">
    <property type="entry name" value="Ribosome_mat_RimM"/>
    <property type="match status" value="1"/>
</dbReference>
<dbReference type="InterPro" id="IPR027275">
    <property type="entry name" value="PRC-brl_dom"/>
</dbReference>
<dbReference type="InterPro" id="IPR011033">
    <property type="entry name" value="PRC_barrel-like_sf"/>
</dbReference>
<dbReference type="InterPro" id="IPR011961">
    <property type="entry name" value="RimM"/>
</dbReference>
<dbReference type="InterPro" id="IPR002676">
    <property type="entry name" value="RimM_N"/>
</dbReference>
<dbReference type="InterPro" id="IPR036976">
    <property type="entry name" value="RimM_N_sf"/>
</dbReference>
<dbReference type="InterPro" id="IPR009000">
    <property type="entry name" value="Transl_B-barrel_sf"/>
</dbReference>
<dbReference type="NCBIfam" id="TIGR02273">
    <property type="entry name" value="16S_RimM"/>
    <property type="match status" value="1"/>
</dbReference>
<dbReference type="PANTHER" id="PTHR33692">
    <property type="entry name" value="RIBOSOME MATURATION FACTOR RIMM"/>
    <property type="match status" value="1"/>
</dbReference>
<dbReference type="PANTHER" id="PTHR33692:SF1">
    <property type="entry name" value="RIBOSOME MATURATION FACTOR RIMM"/>
    <property type="match status" value="1"/>
</dbReference>
<dbReference type="Pfam" id="PF05239">
    <property type="entry name" value="PRC"/>
    <property type="match status" value="1"/>
</dbReference>
<dbReference type="Pfam" id="PF01782">
    <property type="entry name" value="RimM"/>
    <property type="match status" value="1"/>
</dbReference>
<dbReference type="SUPFAM" id="SSF50346">
    <property type="entry name" value="PRC-barrel domain"/>
    <property type="match status" value="1"/>
</dbReference>
<dbReference type="SUPFAM" id="SSF50447">
    <property type="entry name" value="Translation proteins"/>
    <property type="match status" value="1"/>
</dbReference>
<comment type="function">
    <text evidence="1">An accessory protein needed during the final step in the assembly of 30S ribosomal subunit, possibly for assembly of the head region. Essential for efficient processing of 16S rRNA. May be needed both before and after RbfA during the maturation of 16S rRNA. It has affinity for free ribosomal 30S subunits but not for 70S ribosomes.</text>
</comment>
<comment type="subunit">
    <text evidence="1">Binds ribosomal protein uS19.</text>
</comment>
<comment type="subcellular location">
    <subcellularLocation>
        <location evidence="1">Cytoplasm</location>
    </subcellularLocation>
</comment>
<comment type="domain">
    <text evidence="1">The PRC barrel domain binds ribosomal protein uS19.</text>
</comment>
<comment type="similarity">
    <text evidence="1">Belongs to the RimM family.</text>
</comment>
<proteinExistence type="inferred from homology"/>
<organism>
    <name type="scientific">Leuconostoc mesenteroides subsp. mesenteroides (strain ATCC 8293 / DSM 20343 / BCRC 11652 / CCM 1803 / JCM 6124 / NCDO 523 / NBRC 100496 / NCIMB 8023 / NCTC 12954 / NRRL B-1118 / 37Y)</name>
    <dbReference type="NCBI Taxonomy" id="203120"/>
    <lineage>
        <taxon>Bacteria</taxon>
        <taxon>Bacillati</taxon>
        <taxon>Bacillota</taxon>
        <taxon>Bacilli</taxon>
        <taxon>Lactobacillales</taxon>
        <taxon>Lactobacillaceae</taxon>
        <taxon>Leuconostoc</taxon>
    </lineage>
</organism>
<protein>
    <recommendedName>
        <fullName evidence="1">Ribosome maturation factor RimM</fullName>
    </recommendedName>
</protein>